<keyword id="KW-0963">Cytoplasm</keyword>
<keyword id="KW-0460">Magnesium</keyword>
<keyword id="KW-0479">Metal-binding</keyword>
<keyword id="KW-0566">Pantothenate biosynthesis</keyword>
<keyword id="KW-0808">Transferase</keyword>
<gene>
    <name evidence="1" type="primary">panB</name>
    <name type="ordered locus">CLJ_B0494</name>
</gene>
<proteinExistence type="inferred from homology"/>
<reference key="1">
    <citation type="submission" date="2008-05" db="EMBL/GenBank/DDBJ databases">
        <title>Genome sequence of Clostridium botulinum Ba4 strain 657.</title>
        <authorList>
            <person name="Shrivastava S."/>
            <person name="Brown J.L."/>
            <person name="Bruce D."/>
            <person name="Detter C."/>
            <person name="Munk C."/>
            <person name="Smith L.A."/>
            <person name="Smith T.J."/>
            <person name="Sutton G."/>
            <person name="Brettin T.S."/>
        </authorList>
    </citation>
    <scope>NUCLEOTIDE SEQUENCE [LARGE SCALE GENOMIC DNA]</scope>
    <source>
        <strain>657 / Type Ba4</strain>
    </source>
</reference>
<evidence type="ECO:0000255" key="1">
    <source>
        <dbReference type="HAMAP-Rule" id="MF_00156"/>
    </source>
</evidence>
<organism>
    <name type="scientific">Clostridium botulinum (strain 657 / Type Ba4)</name>
    <dbReference type="NCBI Taxonomy" id="515621"/>
    <lineage>
        <taxon>Bacteria</taxon>
        <taxon>Bacillati</taxon>
        <taxon>Bacillota</taxon>
        <taxon>Clostridia</taxon>
        <taxon>Eubacteriales</taxon>
        <taxon>Clostridiaceae</taxon>
        <taxon>Clostridium</taxon>
    </lineage>
</organism>
<sequence length="275" mass="30090">MRNTVSTFQELKDRGEKITMLTAYDYSMAKLIDSSGINGILVGDSLGMVCLGYENTLSVTMEDMIHHTKAVVRGTSNALVVGDMPFMSYQTSIYDAVYNAGRFIKEAGAHAVKLEGGATVAEEIKAIVKAQIPVMGHIGLTPQSVNMFGGFKVQGKNEKVAKKLIEDAKILEEAGAFSIVLECIPEKLSKIISESISIPTIGIGAGKYCDGQILVYQDMLSMFSDFKPKFVKSFGNIGESIKDGVSQYIKEVKESKFPEEKHAFKIDDDVINKLY</sequence>
<comment type="function">
    <text evidence="1">Catalyzes the reversible reaction in which hydroxymethyl group from 5,10-methylenetetrahydrofolate is transferred onto alpha-ketoisovalerate to form ketopantoate.</text>
</comment>
<comment type="catalytic activity">
    <reaction evidence="1">
        <text>3-methyl-2-oxobutanoate + (6R)-5,10-methylene-5,6,7,8-tetrahydrofolate + H2O = 2-dehydropantoate + (6S)-5,6,7,8-tetrahydrofolate</text>
        <dbReference type="Rhea" id="RHEA:11824"/>
        <dbReference type="ChEBI" id="CHEBI:11561"/>
        <dbReference type="ChEBI" id="CHEBI:11851"/>
        <dbReference type="ChEBI" id="CHEBI:15377"/>
        <dbReference type="ChEBI" id="CHEBI:15636"/>
        <dbReference type="ChEBI" id="CHEBI:57453"/>
        <dbReference type="EC" id="2.1.2.11"/>
    </reaction>
</comment>
<comment type="cofactor">
    <cofactor evidence="1">
        <name>Mg(2+)</name>
        <dbReference type="ChEBI" id="CHEBI:18420"/>
    </cofactor>
    <text evidence="1">Binds 1 Mg(2+) ion per subunit.</text>
</comment>
<comment type="pathway">
    <text evidence="1">Cofactor biosynthesis; (R)-pantothenate biosynthesis; (R)-pantoate from 3-methyl-2-oxobutanoate: step 1/2.</text>
</comment>
<comment type="subunit">
    <text evidence="1">Homodecamer; pentamer of dimers.</text>
</comment>
<comment type="subcellular location">
    <subcellularLocation>
        <location evidence="1">Cytoplasm</location>
    </subcellularLocation>
</comment>
<comment type="similarity">
    <text evidence="1">Belongs to the PanB family.</text>
</comment>
<accession>C3L035</accession>
<feature type="chain" id="PRO_1000203467" description="3-methyl-2-oxobutanoate hydroxymethyltransferase">
    <location>
        <begin position="1"/>
        <end position="275"/>
    </location>
</feature>
<feature type="active site" description="Proton acceptor" evidence="1">
    <location>
        <position position="182"/>
    </location>
</feature>
<feature type="binding site" evidence="1">
    <location>
        <begin position="44"/>
        <end position="45"/>
    </location>
    <ligand>
        <name>3-methyl-2-oxobutanoate</name>
        <dbReference type="ChEBI" id="CHEBI:11851"/>
    </ligand>
</feature>
<feature type="binding site" evidence="1">
    <location>
        <position position="44"/>
    </location>
    <ligand>
        <name>Mg(2+)</name>
        <dbReference type="ChEBI" id="CHEBI:18420"/>
    </ligand>
</feature>
<feature type="binding site" evidence="1">
    <location>
        <position position="83"/>
    </location>
    <ligand>
        <name>3-methyl-2-oxobutanoate</name>
        <dbReference type="ChEBI" id="CHEBI:11851"/>
    </ligand>
</feature>
<feature type="binding site" evidence="1">
    <location>
        <position position="83"/>
    </location>
    <ligand>
        <name>Mg(2+)</name>
        <dbReference type="ChEBI" id="CHEBI:18420"/>
    </ligand>
</feature>
<feature type="binding site" evidence="1">
    <location>
        <position position="113"/>
    </location>
    <ligand>
        <name>3-methyl-2-oxobutanoate</name>
        <dbReference type="ChEBI" id="CHEBI:11851"/>
    </ligand>
</feature>
<feature type="binding site" evidence="1">
    <location>
        <position position="115"/>
    </location>
    <ligand>
        <name>Mg(2+)</name>
        <dbReference type="ChEBI" id="CHEBI:18420"/>
    </ligand>
</feature>
<protein>
    <recommendedName>
        <fullName evidence="1">3-methyl-2-oxobutanoate hydroxymethyltransferase</fullName>
        <ecNumber evidence="1">2.1.2.11</ecNumber>
    </recommendedName>
    <alternativeName>
        <fullName evidence="1">Ketopantoate hydroxymethyltransferase</fullName>
        <shortName evidence="1">KPHMT</shortName>
    </alternativeName>
</protein>
<dbReference type="EC" id="2.1.2.11" evidence="1"/>
<dbReference type="EMBL" id="CP001083">
    <property type="protein sequence ID" value="ACQ53533.1"/>
    <property type="molecule type" value="Genomic_DNA"/>
</dbReference>
<dbReference type="RefSeq" id="WP_003359637.1">
    <property type="nucleotide sequence ID" value="NC_012658.1"/>
</dbReference>
<dbReference type="SMR" id="C3L035"/>
<dbReference type="KEGG" id="cbi:CLJ_B0494"/>
<dbReference type="HOGENOM" id="CLU_036645_1_0_9"/>
<dbReference type="UniPathway" id="UPA00028">
    <property type="reaction ID" value="UER00003"/>
</dbReference>
<dbReference type="Proteomes" id="UP000002333">
    <property type="component" value="Chromosome"/>
</dbReference>
<dbReference type="GO" id="GO:0005737">
    <property type="term" value="C:cytoplasm"/>
    <property type="evidence" value="ECO:0007669"/>
    <property type="project" value="UniProtKB-SubCell"/>
</dbReference>
<dbReference type="GO" id="GO:0003864">
    <property type="term" value="F:3-methyl-2-oxobutanoate hydroxymethyltransferase activity"/>
    <property type="evidence" value="ECO:0007669"/>
    <property type="project" value="UniProtKB-UniRule"/>
</dbReference>
<dbReference type="GO" id="GO:0000287">
    <property type="term" value="F:magnesium ion binding"/>
    <property type="evidence" value="ECO:0007669"/>
    <property type="project" value="TreeGrafter"/>
</dbReference>
<dbReference type="GO" id="GO:0015940">
    <property type="term" value="P:pantothenate biosynthetic process"/>
    <property type="evidence" value="ECO:0007669"/>
    <property type="project" value="UniProtKB-UniRule"/>
</dbReference>
<dbReference type="CDD" id="cd06557">
    <property type="entry name" value="KPHMT-like"/>
    <property type="match status" value="1"/>
</dbReference>
<dbReference type="FunFam" id="3.20.20.60:FF:000003">
    <property type="entry name" value="3-methyl-2-oxobutanoate hydroxymethyltransferase"/>
    <property type="match status" value="1"/>
</dbReference>
<dbReference type="Gene3D" id="3.20.20.60">
    <property type="entry name" value="Phosphoenolpyruvate-binding domains"/>
    <property type="match status" value="1"/>
</dbReference>
<dbReference type="HAMAP" id="MF_00156">
    <property type="entry name" value="PanB"/>
    <property type="match status" value="1"/>
</dbReference>
<dbReference type="InterPro" id="IPR003700">
    <property type="entry name" value="Pantoate_hydroxy_MeTrfase"/>
</dbReference>
<dbReference type="InterPro" id="IPR015813">
    <property type="entry name" value="Pyrv/PenolPyrv_kinase-like_dom"/>
</dbReference>
<dbReference type="InterPro" id="IPR040442">
    <property type="entry name" value="Pyrv_kinase-like_dom_sf"/>
</dbReference>
<dbReference type="NCBIfam" id="TIGR00222">
    <property type="entry name" value="panB"/>
    <property type="match status" value="1"/>
</dbReference>
<dbReference type="NCBIfam" id="NF001452">
    <property type="entry name" value="PRK00311.1"/>
    <property type="match status" value="1"/>
</dbReference>
<dbReference type="PANTHER" id="PTHR20881">
    <property type="entry name" value="3-METHYL-2-OXOBUTANOATE HYDROXYMETHYLTRANSFERASE"/>
    <property type="match status" value="1"/>
</dbReference>
<dbReference type="PANTHER" id="PTHR20881:SF0">
    <property type="entry name" value="3-METHYL-2-OXOBUTANOATE HYDROXYMETHYLTRANSFERASE"/>
    <property type="match status" value="1"/>
</dbReference>
<dbReference type="Pfam" id="PF02548">
    <property type="entry name" value="Pantoate_transf"/>
    <property type="match status" value="1"/>
</dbReference>
<dbReference type="PIRSF" id="PIRSF000388">
    <property type="entry name" value="Pantoate_hydroxy_MeTrfase"/>
    <property type="match status" value="1"/>
</dbReference>
<dbReference type="SUPFAM" id="SSF51621">
    <property type="entry name" value="Phosphoenolpyruvate/pyruvate domain"/>
    <property type="match status" value="1"/>
</dbReference>
<name>PANB_CLOB6</name>